<evidence type="ECO:0000250" key="1"/>
<evidence type="ECO:0000255" key="2">
    <source>
        <dbReference type="HAMAP-Rule" id="MF_01398"/>
    </source>
</evidence>
<reference key="1">
    <citation type="submission" date="2005-08" db="EMBL/GenBank/DDBJ databases">
        <title>Complete sequence of Pelodictyon luteolum DSM 273.</title>
        <authorList>
            <consortium name="US DOE Joint Genome Institute"/>
            <person name="Copeland A."/>
            <person name="Lucas S."/>
            <person name="Lapidus A."/>
            <person name="Barry K."/>
            <person name="Detter J.C."/>
            <person name="Glavina T."/>
            <person name="Hammon N."/>
            <person name="Israni S."/>
            <person name="Pitluck S."/>
            <person name="Bryant D."/>
            <person name="Schmutz J."/>
            <person name="Larimer F."/>
            <person name="Land M."/>
            <person name="Kyrpides N."/>
            <person name="Ivanova N."/>
            <person name="Richardson P."/>
        </authorList>
    </citation>
    <scope>NUCLEOTIDE SEQUENCE [LARGE SCALE GENOMIC DNA]</scope>
    <source>
        <strain>DSM 273 / BCRC 81028 / 2530</strain>
    </source>
</reference>
<keyword id="KW-0066">ATP synthesis</keyword>
<keyword id="KW-0997">Cell inner membrane</keyword>
<keyword id="KW-1003">Cell membrane</keyword>
<keyword id="KW-0138">CF(0)</keyword>
<keyword id="KW-0375">Hydrogen ion transport</keyword>
<keyword id="KW-0406">Ion transport</keyword>
<keyword id="KW-0472">Membrane</keyword>
<keyword id="KW-1185">Reference proteome</keyword>
<keyword id="KW-0812">Transmembrane</keyword>
<keyword id="KW-1133">Transmembrane helix</keyword>
<keyword id="KW-0813">Transport</keyword>
<gene>
    <name evidence="2" type="primary">atpF2</name>
    <name type="ordered locus">Plut_2096</name>
</gene>
<comment type="function">
    <text evidence="2">F(1)F(0) ATP synthase produces ATP from ADP in the presence of a proton or sodium gradient. F-type ATPases consist of two structural domains, F(1) containing the extramembraneous catalytic core and F(0) containing the membrane proton channel, linked together by a central stalk and a peripheral stalk. During catalysis, ATP synthesis in the catalytic domain of F(1) is coupled via a rotary mechanism of the central stalk subunits to proton translocation.</text>
</comment>
<comment type="function">
    <text evidence="2">Component of the F(0) channel, it forms part of the peripheral stalk, linking F(1) to F(0).</text>
</comment>
<comment type="subunit">
    <text evidence="1">F-type ATPases have 2 components, F(1) - the catalytic core - and F(0) - the membrane proton channel. F(1) has five subunits: alpha(3), beta(3), gamma(1), delta(1), epsilon(1). F(0) has four main subunits: a(1), b(2) and c(10-14). The alpha and beta chains form an alternating ring which encloses part of the gamma chain. F(1) is attached to F(0) by a central stalk formed by the gamma and epsilon chains, while a peripheral stalk is formed by the delta and b chains (By similarity).</text>
</comment>
<comment type="subcellular location">
    <subcellularLocation>
        <location evidence="2">Cell inner membrane</location>
        <topology evidence="2">Single-pass membrane protein</topology>
    </subcellularLocation>
</comment>
<comment type="similarity">
    <text evidence="2">Belongs to the ATPase B chain family.</text>
</comment>
<protein>
    <recommendedName>
        <fullName evidence="2">ATP synthase subunit b 2</fullName>
    </recommendedName>
    <alternativeName>
        <fullName evidence="2">ATP synthase F(0) sector subunit b 2</fullName>
    </alternativeName>
    <alternativeName>
        <fullName evidence="2">ATPase subunit I 2</fullName>
    </alternativeName>
    <alternativeName>
        <fullName evidence="2">F-type ATPase subunit b 2</fullName>
        <shortName evidence="2">F-ATPase subunit b 2</shortName>
    </alternativeName>
</protein>
<accession>Q3B143</accession>
<dbReference type="EMBL" id="CP000096">
    <property type="protein sequence ID" value="ABB24938.1"/>
    <property type="molecule type" value="Genomic_DNA"/>
</dbReference>
<dbReference type="RefSeq" id="WP_011358808.1">
    <property type="nucleotide sequence ID" value="NC_007512.1"/>
</dbReference>
<dbReference type="SMR" id="Q3B143"/>
<dbReference type="STRING" id="319225.Plut_2096"/>
<dbReference type="KEGG" id="plt:Plut_2096"/>
<dbReference type="eggNOG" id="COG0711">
    <property type="taxonomic scope" value="Bacteria"/>
</dbReference>
<dbReference type="HOGENOM" id="CLU_079215_4_1_10"/>
<dbReference type="OrthoDB" id="9795289at2"/>
<dbReference type="Proteomes" id="UP000002709">
    <property type="component" value="Chromosome"/>
</dbReference>
<dbReference type="GO" id="GO:0005886">
    <property type="term" value="C:plasma membrane"/>
    <property type="evidence" value="ECO:0007669"/>
    <property type="project" value="UniProtKB-SubCell"/>
</dbReference>
<dbReference type="GO" id="GO:0045259">
    <property type="term" value="C:proton-transporting ATP synthase complex"/>
    <property type="evidence" value="ECO:0007669"/>
    <property type="project" value="UniProtKB-KW"/>
</dbReference>
<dbReference type="GO" id="GO:0046933">
    <property type="term" value="F:proton-transporting ATP synthase activity, rotational mechanism"/>
    <property type="evidence" value="ECO:0007669"/>
    <property type="project" value="UniProtKB-UniRule"/>
</dbReference>
<dbReference type="GO" id="GO:0046961">
    <property type="term" value="F:proton-transporting ATPase activity, rotational mechanism"/>
    <property type="evidence" value="ECO:0007669"/>
    <property type="project" value="TreeGrafter"/>
</dbReference>
<dbReference type="CDD" id="cd06503">
    <property type="entry name" value="ATP-synt_Fo_b"/>
    <property type="match status" value="1"/>
</dbReference>
<dbReference type="Gene3D" id="1.20.5.620">
    <property type="entry name" value="F1F0 ATP synthase subunit B, membrane domain"/>
    <property type="match status" value="1"/>
</dbReference>
<dbReference type="HAMAP" id="MF_01398">
    <property type="entry name" value="ATP_synth_b_bprime"/>
    <property type="match status" value="1"/>
</dbReference>
<dbReference type="InterPro" id="IPR028987">
    <property type="entry name" value="ATP_synth_B-like_membr_sf"/>
</dbReference>
<dbReference type="InterPro" id="IPR002146">
    <property type="entry name" value="ATP_synth_b/b'su_bac/chlpt"/>
</dbReference>
<dbReference type="InterPro" id="IPR005864">
    <property type="entry name" value="ATP_synth_F0_bsu_bac"/>
</dbReference>
<dbReference type="InterPro" id="IPR050059">
    <property type="entry name" value="ATP_synthase_B_chain"/>
</dbReference>
<dbReference type="NCBIfam" id="TIGR01144">
    <property type="entry name" value="ATP_synt_b"/>
    <property type="match status" value="1"/>
</dbReference>
<dbReference type="NCBIfam" id="NF011042">
    <property type="entry name" value="PRK14472.1"/>
    <property type="match status" value="1"/>
</dbReference>
<dbReference type="PANTHER" id="PTHR33445:SF1">
    <property type="entry name" value="ATP SYNTHASE SUBUNIT B"/>
    <property type="match status" value="1"/>
</dbReference>
<dbReference type="PANTHER" id="PTHR33445">
    <property type="entry name" value="ATP SYNTHASE SUBUNIT B', CHLOROPLASTIC"/>
    <property type="match status" value="1"/>
</dbReference>
<dbReference type="Pfam" id="PF00430">
    <property type="entry name" value="ATP-synt_B"/>
    <property type="match status" value="1"/>
</dbReference>
<dbReference type="SUPFAM" id="SSF81573">
    <property type="entry name" value="F1F0 ATP synthase subunit B, membrane domain"/>
    <property type="match status" value="1"/>
</dbReference>
<proteinExistence type="inferred from homology"/>
<sequence>MLTSGNILLAGSLLSPEPGLIFWTTITFVLVLIILKKIAWGPIISALEEREKGIQSSIDRAHGAKEESEAILRQNRELLAKADAEADRVIREGREYAEKIRAEITEKAHQESQKMISAAKEEIEQEKRRALAELRNEVADLAVRGAEKIIRGVLDADVQKKVVDSMIQDLSTNRN</sequence>
<organism>
    <name type="scientific">Chlorobium luteolum (strain DSM 273 / BCRC 81028 / 2530)</name>
    <name type="common">Pelodictyon luteolum</name>
    <dbReference type="NCBI Taxonomy" id="319225"/>
    <lineage>
        <taxon>Bacteria</taxon>
        <taxon>Pseudomonadati</taxon>
        <taxon>Chlorobiota</taxon>
        <taxon>Chlorobiia</taxon>
        <taxon>Chlorobiales</taxon>
        <taxon>Chlorobiaceae</taxon>
        <taxon>Chlorobium/Pelodictyon group</taxon>
        <taxon>Pelodictyon</taxon>
    </lineage>
</organism>
<feature type="chain" id="PRO_0000368651" description="ATP synthase subunit b 2">
    <location>
        <begin position="1"/>
        <end position="175"/>
    </location>
</feature>
<feature type="transmembrane region" description="Helical" evidence="2">
    <location>
        <begin position="20"/>
        <end position="40"/>
    </location>
</feature>
<name>ATPF2_CHLL3</name>